<name>UBIA_SALPB</name>
<organism>
    <name type="scientific">Salmonella paratyphi B (strain ATCC BAA-1250 / SPB7)</name>
    <dbReference type="NCBI Taxonomy" id="1016998"/>
    <lineage>
        <taxon>Bacteria</taxon>
        <taxon>Pseudomonadati</taxon>
        <taxon>Pseudomonadota</taxon>
        <taxon>Gammaproteobacteria</taxon>
        <taxon>Enterobacterales</taxon>
        <taxon>Enterobacteriaceae</taxon>
        <taxon>Salmonella</taxon>
    </lineage>
</organism>
<proteinExistence type="inferred from homology"/>
<comment type="function">
    <text evidence="1">Catalyzes the prenylation of para-hydroxybenzoate (PHB) with an all-trans polyprenyl group. Mediates the second step in the final reaction sequence of ubiquinone-8 (UQ-8) biosynthesis, which is the condensation of the polyisoprenoid side chain with PHB, generating the first membrane-bound Q intermediate 3-octaprenyl-4-hydroxybenzoate.</text>
</comment>
<comment type="catalytic activity">
    <reaction evidence="1">
        <text>all-trans-octaprenyl diphosphate + 4-hydroxybenzoate = 4-hydroxy-3-(all-trans-octaprenyl)benzoate + diphosphate</text>
        <dbReference type="Rhea" id="RHEA:27782"/>
        <dbReference type="ChEBI" id="CHEBI:1617"/>
        <dbReference type="ChEBI" id="CHEBI:17879"/>
        <dbReference type="ChEBI" id="CHEBI:33019"/>
        <dbReference type="ChEBI" id="CHEBI:57711"/>
        <dbReference type="EC" id="2.5.1.39"/>
    </reaction>
</comment>
<comment type="cofactor">
    <cofactor evidence="1">
        <name>Mg(2+)</name>
        <dbReference type="ChEBI" id="CHEBI:18420"/>
    </cofactor>
</comment>
<comment type="pathway">
    <text evidence="1">Cofactor biosynthesis; ubiquinone biosynthesis.</text>
</comment>
<comment type="subcellular location">
    <subcellularLocation>
        <location evidence="1">Cell inner membrane</location>
        <topology evidence="1">Multi-pass membrane protein</topology>
    </subcellularLocation>
</comment>
<comment type="similarity">
    <text evidence="1">Belongs to the UbiA prenyltransferase family.</text>
</comment>
<protein>
    <recommendedName>
        <fullName evidence="1">4-hydroxybenzoate octaprenyltransferase</fullName>
        <ecNumber evidence="1">2.5.1.39</ecNumber>
    </recommendedName>
    <alternativeName>
        <fullName evidence="1">4-HB polyprenyltransferase</fullName>
    </alternativeName>
</protein>
<reference key="1">
    <citation type="submission" date="2007-11" db="EMBL/GenBank/DDBJ databases">
        <authorList>
            <consortium name="The Salmonella enterica serovar Paratyphi B Genome Sequencing Project"/>
            <person name="McClelland M."/>
            <person name="Sanderson E.K."/>
            <person name="Porwollik S."/>
            <person name="Spieth J."/>
            <person name="Clifton W.S."/>
            <person name="Fulton R."/>
            <person name="Cordes M."/>
            <person name="Wollam A."/>
            <person name="Shah N."/>
            <person name="Pepin K."/>
            <person name="Bhonagiri V."/>
            <person name="Nash W."/>
            <person name="Johnson M."/>
            <person name="Thiruvilangam P."/>
            <person name="Wilson R."/>
        </authorList>
    </citation>
    <scope>NUCLEOTIDE SEQUENCE [LARGE SCALE GENOMIC DNA]</scope>
    <source>
        <strain>ATCC BAA-1250 / SPB7</strain>
    </source>
</reference>
<sequence length="290" mass="32602">MEWSLTQSKLLAFHRLMRTDKPIGALLLLWPTLWALWVATPGMPQLWILAVFVAGVWLMRAAGCVVNDYADRKFDGHVKRTVNRPLPSGAVTEKEARNLFVVLVLLAFLLVLTLNAMTILLSVAALALAWVYPFMKRYTHLPQVVLGAAFGWSIPMAFAAVSESLPLSCWLMFLANILWAVAYDTQYAMVDRDDDIKIGIKSTAILFGRYDTLIIGILQLGVMALMALIGWLNGLGWGYYWAVLVAGALFVYQQKLIANREREACFKAFMNNNYVGLVLFLGLAMSYWHF</sequence>
<feature type="chain" id="PRO_1000088179" description="4-hydroxybenzoate octaprenyltransferase">
    <location>
        <begin position="1"/>
        <end position="290"/>
    </location>
</feature>
<feature type="transmembrane region" description="Helical" evidence="1">
    <location>
        <begin position="23"/>
        <end position="43"/>
    </location>
</feature>
<feature type="transmembrane region" description="Helical" evidence="1">
    <location>
        <begin position="46"/>
        <end position="66"/>
    </location>
</feature>
<feature type="transmembrane region" description="Helical" evidence="1">
    <location>
        <begin position="99"/>
        <end position="119"/>
    </location>
</feature>
<feature type="transmembrane region" description="Helical" evidence="1">
    <location>
        <begin position="141"/>
        <end position="161"/>
    </location>
</feature>
<feature type="transmembrane region" description="Helical" evidence="1">
    <location>
        <begin position="163"/>
        <end position="183"/>
    </location>
</feature>
<feature type="transmembrane region" description="Helical" evidence="1">
    <location>
        <begin position="212"/>
        <end position="232"/>
    </location>
</feature>
<feature type="transmembrane region" description="Helical" evidence="1">
    <location>
        <begin position="233"/>
        <end position="253"/>
    </location>
</feature>
<feature type="transmembrane region" description="Helical" evidence="1">
    <location>
        <begin position="268"/>
        <end position="288"/>
    </location>
</feature>
<dbReference type="EC" id="2.5.1.39" evidence="1"/>
<dbReference type="EMBL" id="CP000886">
    <property type="protein sequence ID" value="ABX70494.1"/>
    <property type="molecule type" value="Genomic_DNA"/>
</dbReference>
<dbReference type="RefSeq" id="WP_000455249.1">
    <property type="nucleotide sequence ID" value="NC_010102.1"/>
</dbReference>
<dbReference type="SMR" id="A9N1L3"/>
<dbReference type="KEGG" id="spq:SPAB_05217"/>
<dbReference type="PATRIC" id="fig|1016998.12.peg.4886"/>
<dbReference type="HOGENOM" id="CLU_034879_1_0_6"/>
<dbReference type="BioCyc" id="SENT1016998:SPAB_RS21245-MONOMER"/>
<dbReference type="UniPathway" id="UPA00232"/>
<dbReference type="Proteomes" id="UP000008556">
    <property type="component" value="Chromosome"/>
</dbReference>
<dbReference type="GO" id="GO:0005886">
    <property type="term" value="C:plasma membrane"/>
    <property type="evidence" value="ECO:0007669"/>
    <property type="project" value="UniProtKB-SubCell"/>
</dbReference>
<dbReference type="GO" id="GO:0008412">
    <property type="term" value="F:4-hydroxybenzoate polyprenyltransferase activity"/>
    <property type="evidence" value="ECO:0007669"/>
    <property type="project" value="UniProtKB-UniRule"/>
</dbReference>
<dbReference type="GO" id="GO:0006744">
    <property type="term" value="P:ubiquinone biosynthetic process"/>
    <property type="evidence" value="ECO:0007669"/>
    <property type="project" value="UniProtKB-UniRule"/>
</dbReference>
<dbReference type="CDD" id="cd13959">
    <property type="entry name" value="PT_UbiA_COQ2"/>
    <property type="match status" value="1"/>
</dbReference>
<dbReference type="FunFam" id="1.10.357.140:FF:000002">
    <property type="entry name" value="4-hydroxybenzoate octaprenyltransferase"/>
    <property type="match status" value="1"/>
</dbReference>
<dbReference type="FunFam" id="1.20.120.1780:FF:000001">
    <property type="entry name" value="4-hydroxybenzoate octaprenyltransferase"/>
    <property type="match status" value="1"/>
</dbReference>
<dbReference type="Gene3D" id="1.10.357.140">
    <property type="entry name" value="UbiA prenyltransferase"/>
    <property type="match status" value="1"/>
</dbReference>
<dbReference type="Gene3D" id="1.20.120.1780">
    <property type="entry name" value="UbiA prenyltransferase"/>
    <property type="match status" value="1"/>
</dbReference>
<dbReference type="HAMAP" id="MF_01635">
    <property type="entry name" value="UbiA"/>
    <property type="match status" value="1"/>
</dbReference>
<dbReference type="InterPro" id="IPR006370">
    <property type="entry name" value="HB_polyprenyltransferase-like"/>
</dbReference>
<dbReference type="InterPro" id="IPR039653">
    <property type="entry name" value="Prenyltransferase"/>
</dbReference>
<dbReference type="InterPro" id="IPR000537">
    <property type="entry name" value="UbiA_prenyltransferase"/>
</dbReference>
<dbReference type="InterPro" id="IPR030470">
    <property type="entry name" value="UbiA_prenylTrfase_CS"/>
</dbReference>
<dbReference type="InterPro" id="IPR044878">
    <property type="entry name" value="UbiA_sf"/>
</dbReference>
<dbReference type="NCBIfam" id="TIGR01474">
    <property type="entry name" value="ubiA_proteo"/>
    <property type="match status" value="1"/>
</dbReference>
<dbReference type="PANTHER" id="PTHR11048:SF28">
    <property type="entry name" value="4-HYDROXYBENZOATE POLYPRENYLTRANSFERASE, MITOCHONDRIAL"/>
    <property type="match status" value="1"/>
</dbReference>
<dbReference type="PANTHER" id="PTHR11048">
    <property type="entry name" value="PRENYLTRANSFERASES"/>
    <property type="match status" value="1"/>
</dbReference>
<dbReference type="Pfam" id="PF01040">
    <property type="entry name" value="UbiA"/>
    <property type="match status" value="1"/>
</dbReference>
<dbReference type="PROSITE" id="PS00943">
    <property type="entry name" value="UBIA"/>
    <property type="match status" value="1"/>
</dbReference>
<keyword id="KW-0997">Cell inner membrane</keyword>
<keyword id="KW-1003">Cell membrane</keyword>
<keyword id="KW-0460">Magnesium</keyword>
<keyword id="KW-0472">Membrane</keyword>
<keyword id="KW-0808">Transferase</keyword>
<keyword id="KW-0812">Transmembrane</keyword>
<keyword id="KW-1133">Transmembrane helix</keyword>
<keyword id="KW-0831">Ubiquinone biosynthesis</keyword>
<gene>
    <name evidence="1" type="primary">ubiA</name>
    <name type="ordered locus">SPAB_05217</name>
</gene>
<evidence type="ECO:0000255" key="1">
    <source>
        <dbReference type="HAMAP-Rule" id="MF_01635"/>
    </source>
</evidence>
<accession>A9N1L3</accession>